<proteinExistence type="evidence at transcript level"/>
<keyword id="KW-0385">Hypusine</keyword>
<keyword id="KW-0396">Initiation factor</keyword>
<keyword id="KW-0648">Protein biosynthesis</keyword>
<reference key="1">
    <citation type="journal article" date="1992" name="Nucleic Acids Res.">
        <title>Differential expression of genes encoding the hypusine-containing translation initiation factor, eIF-5A, in tobacco.</title>
        <authorList>
            <person name="Chamot D."/>
            <person name="Kuhlemeter C."/>
        </authorList>
    </citation>
    <scope>NUCLEOTIDE SEQUENCE [MRNA]</scope>
    <source>
        <tissue>Leaf</tissue>
    </source>
</reference>
<organism>
    <name type="scientific">Nicotiana plumbaginifolia</name>
    <name type="common">Leadwort-leaved tobacco</name>
    <name type="synonym">Tex-Mex tobacco</name>
    <dbReference type="NCBI Taxonomy" id="4092"/>
    <lineage>
        <taxon>Eukaryota</taxon>
        <taxon>Viridiplantae</taxon>
        <taxon>Streptophyta</taxon>
        <taxon>Embryophyta</taxon>
        <taxon>Tracheophyta</taxon>
        <taxon>Spermatophyta</taxon>
        <taxon>Magnoliopsida</taxon>
        <taxon>eudicotyledons</taxon>
        <taxon>Gunneridae</taxon>
        <taxon>Pentapetalae</taxon>
        <taxon>asterids</taxon>
        <taxon>lamiids</taxon>
        <taxon>Solanales</taxon>
        <taxon>Solanaceae</taxon>
        <taxon>Nicotianoideae</taxon>
        <taxon>Nicotianeae</taxon>
        <taxon>Nicotiana</taxon>
    </lineage>
</organism>
<protein>
    <recommendedName>
        <fullName>Eukaryotic translation initiation factor 5A-2</fullName>
        <shortName>eIF-5A-2</shortName>
    </recommendedName>
    <alternativeName>
        <fullName>eIF-4D</fullName>
    </alternativeName>
</protein>
<accession>P24922</accession>
<feature type="chain" id="PRO_0000142476" description="Eukaryotic translation initiation factor 5A-2">
    <location>
        <begin position="1"/>
        <end position="159"/>
    </location>
</feature>
<feature type="region of interest" description="Disordered" evidence="3">
    <location>
        <begin position="1"/>
        <end position="23"/>
    </location>
</feature>
<feature type="compositionally biased region" description="Basic and acidic residues" evidence="3">
    <location>
        <begin position="1"/>
        <end position="12"/>
    </location>
</feature>
<feature type="modified residue" description="Hypusine" evidence="2">
    <location>
        <position position="52"/>
    </location>
</feature>
<sequence>MSDEEHQFESKADAGASKTYPQQAGTIRKNGHIVIKGRPCKVVEVSTSKTGKHGHAKCHFVAIDIFTGKKLEDIVPSSHNCDVPHVNRTDYQLIDISEDGFVSLLTENGNTKDDLRLPTDDNLLTQIKDGFAEGKDLVVSVMSAMGEEQICALKDIGPK</sequence>
<gene>
    <name type="primary">EIF-5A2</name>
</gene>
<evidence type="ECO:0000250" key="1">
    <source>
        <dbReference type="UniProtKB" id="P23301"/>
    </source>
</evidence>
<evidence type="ECO:0000250" key="2">
    <source>
        <dbReference type="UniProtKB" id="Q9XI91"/>
    </source>
</evidence>
<evidence type="ECO:0000256" key="3">
    <source>
        <dbReference type="SAM" id="MobiDB-lite"/>
    </source>
</evidence>
<evidence type="ECO:0000305" key="4"/>
<dbReference type="EMBL" id="X63542">
    <property type="protein sequence ID" value="CAA45104.1"/>
    <property type="molecule type" value="mRNA"/>
</dbReference>
<dbReference type="PIR" id="S21059">
    <property type="entry name" value="S21059"/>
</dbReference>
<dbReference type="SMR" id="P24922"/>
<dbReference type="GO" id="GO:0043022">
    <property type="term" value="F:ribosome binding"/>
    <property type="evidence" value="ECO:0007669"/>
    <property type="project" value="InterPro"/>
</dbReference>
<dbReference type="GO" id="GO:0003723">
    <property type="term" value="F:RNA binding"/>
    <property type="evidence" value="ECO:0007669"/>
    <property type="project" value="InterPro"/>
</dbReference>
<dbReference type="GO" id="GO:0003746">
    <property type="term" value="F:translation elongation factor activity"/>
    <property type="evidence" value="ECO:0007669"/>
    <property type="project" value="InterPro"/>
</dbReference>
<dbReference type="GO" id="GO:0003743">
    <property type="term" value="F:translation initiation factor activity"/>
    <property type="evidence" value="ECO:0007669"/>
    <property type="project" value="UniProtKB-KW"/>
</dbReference>
<dbReference type="GO" id="GO:0045901">
    <property type="term" value="P:positive regulation of translational elongation"/>
    <property type="evidence" value="ECO:0007669"/>
    <property type="project" value="InterPro"/>
</dbReference>
<dbReference type="GO" id="GO:0045905">
    <property type="term" value="P:positive regulation of translational termination"/>
    <property type="evidence" value="ECO:0007669"/>
    <property type="project" value="InterPro"/>
</dbReference>
<dbReference type="CDD" id="cd04468">
    <property type="entry name" value="S1_eIF5A"/>
    <property type="match status" value="1"/>
</dbReference>
<dbReference type="FunFam" id="2.30.30.30:FF:000012">
    <property type="entry name" value="Eukaryotic translation initiation factor 5A"/>
    <property type="match status" value="1"/>
</dbReference>
<dbReference type="FunFam" id="2.40.50.140:FF:000034">
    <property type="entry name" value="Eukaryotic translation initiation factor 5A"/>
    <property type="match status" value="1"/>
</dbReference>
<dbReference type="Gene3D" id="2.30.30.30">
    <property type="match status" value="1"/>
</dbReference>
<dbReference type="Gene3D" id="2.40.50.140">
    <property type="entry name" value="Nucleic acid-binding proteins"/>
    <property type="match status" value="1"/>
</dbReference>
<dbReference type="InterPro" id="IPR001884">
    <property type="entry name" value="IF5A-like"/>
</dbReference>
<dbReference type="InterPro" id="IPR048670">
    <property type="entry name" value="IF5A-like_N"/>
</dbReference>
<dbReference type="InterPro" id="IPR012340">
    <property type="entry name" value="NA-bd_OB-fold"/>
</dbReference>
<dbReference type="InterPro" id="IPR014722">
    <property type="entry name" value="Rib_uL2_dom2"/>
</dbReference>
<dbReference type="InterPro" id="IPR019769">
    <property type="entry name" value="Trans_elong_IF5A_hypusine_site"/>
</dbReference>
<dbReference type="InterPro" id="IPR020189">
    <property type="entry name" value="Transl_elong_IF5A_C"/>
</dbReference>
<dbReference type="InterPro" id="IPR008991">
    <property type="entry name" value="Translation_prot_SH3-like_sf"/>
</dbReference>
<dbReference type="NCBIfam" id="TIGR00037">
    <property type="entry name" value="eIF_5A"/>
    <property type="match status" value="1"/>
</dbReference>
<dbReference type="PANTHER" id="PTHR11673">
    <property type="entry name" value="TRANSLATION INITIATION FACTOR 5A FAMILY MEMBER"/>
    <property type="match status" value="1"/>
</dbReference>
<dbReference type="Pfam" id="PF01287">
    <property type="entry name" value="eIF-5a"/>
    <property type="match status" value="1"/>
</dbReference>
<dbReference type="Pfam" id="PF21485">
    <property type="entry name" value="IF5A-like_N"/>
    <property type="match status" value="1"/>
</dbReference>
<dbReference type="PIRSF" id="PIRSF003025">
    <property type="entry name" value="eIF5A"/>
    <property type="match status" value="1"/>
</dbReference>
<dbReference type="SMART" id="SM01376">
    <property type="entry name" value="eIF-5a"/>
    <property type="match status" value="1"/>
</dbReference>
<dbReference type="SUPFAM" id="SSF50249">
    <property type="entry name" value="Nucleic acid-binding proteins"/>
    <property type="match status" value="1"/>
</dbReference>
<dbReference type="SUPFAM" id="SSF50104">
    <property type="entry name" value="Translation proteins SH3-like domain"/>
    <property type="match status" value="1"/>
</dbReference>
<dbReference type="PROSITE" id="PS00302">
    <property type="entry name" value="IF5A_HYPUSINE"/>
    <property type="match status" value="1"/>
</dbReference>
<comment type="function">
    <text evidence="1">Translation factor that promotes translation elongation and termination, particularly upon ribosome stalling at specific amino acid sequence contexts (By similarity). Binds between the exit (E) and peptidyl (P) site of the ribosome and promotes rescue of stalled ribosome: specifically required for efficient translation of polyproline-containing peptides as well as other motifs that stall the ribosome (By similarity). Acts as a ribosome quality control (RQC) cofactor by joining the RQC complex to facilitate peptidyl transfer during CAT tailing step (By similarity).</text>
</comment>
<comment type="PTM">
    <text evidence="2">Lys-52 undergoes hypusination, a unique post-translational modification that consists in the addition of a butylamino group from spermidine to lysine side chain, leading to the formation of the unusual amino acid hypusine. eIF-5As are the only known proteins to undergo this modification, which is essential for their function.</text>
</comment>
<comment type="miscellaneous">
    <text>There are at least two genes for eIF-5A in tobacco: 5A1 may regulate the light-dependent translation of specific transcripts while 5A2 may be a housekeeping protein.</text>
</comment>
<comment type="similarity">
    <text evidence="4">Belongs to the eIF-5A family.</text>
</comment>
<name>IF5A2_NICPL</name>